<reference key="1">
    <citation type="journal article" date="2005" name="Genome Res.">
        <title>Sequence, annotation, and analysis of synteny between rice chromosome 3 and diverged grass species.</title>
        <authorList>
            <consortium name="The rice chromosome 3 sequencing consortium"/>
            <person name="Buell C.R."/>
            <person name="Yuan Q."/>
            <person name="Ouyang S."/>
            <person name="Liu J."/>
            <person name="Zhu W."/>
            <person name="Wang A."/>
            <person name="Maiti R."/>
            <person name="Haas B."/>
            <person name="Wortman J."/>
            <person name="Pertea M."/>
            <person name="Jones K.M."/>
            <person name="Kim M."/>
            <person name="Overton L."/>
            <person name="Tsitrin T."/>
            <person name="Fadrosh D."/>
            <person name="Bera J."/>
            <person name="Weaver B."/>
            <person name="Jin S."/>
            <person name="Johri S."/>
            <person name="Reardon M."/>
            <person name="Webb K."/>
            <person name="Hill J."/>
            <person name="Moffat K."/>
            <person name="Tallon L."/>
            <person name="Van Aken S."/>
            <person name="Lewis M."/>
            <person name="Utterback T."/>
            <person name="Feldblyum T."/>
            <person name="Zismann V."/>
            <person name="Iobst S."/>
            <person name="Hsiao J."/>
            <person name="de Vazeille A.R."/>
            <person name="Salzberg S.L."/>
            <person name="White O."/>
            <person name="Fraser C.M."/>
            <person name="Yu Y."/>
            <person name="Kim H."/>
            <person name="Rambo T."/>
            <person name="Currie J."/>
            <person name="Collura K."/>
            <person name="Kernodle-Thompson S."/>
            <person name="Wei F."/>
            <person name="Kudrna K."/>
            <person name="Ammiraju J.S.S."/>
            <person name="Luo M."/>
            <person name="Goicoechea J.L."/>
            <person name="Wing R.A."/>
            <person name="Henry D."/>
            <person name="Oates R."/>
            <person name="Palmer M."/>
            <person name="Pries G."/>
            <person name="Saski C."/>
            <person name="Simmons J."/>
            <person name="Soderlund C."/>
            <person name="Nelson W."/>
            <person name="de la Bastide M."/>
            <person name="Spiegel L."/>
            <person name="Nascimento L."/>
            <person name="Huang E."/>
            <person name="Preston R."/>
            <person name="Zutavern T."/>
            <person name="Palmer L."/>
            <person name="O'Shaughnessy A."/>
            <person name="Dike S."/>
            <person name="McCombie W.R."/>
            <person name="Minx P."/>
            <person name="Cordum H."/>
            <person name="Wilson R."/>
            <person name="Jin W."/>
            <person name="Lee H.R."/>
            <person name="Jiang J."/>
            <person name="Jackson S."/>
        </authorList>
    </citation>
    <scope>NUCLEOTIDE SEQUENCE [LARGE SCALE GENOMIC DNA]</scope>
    <source>
        <strain>cv. Nipponbare</strain>
    </source>
</reference>
<reference key="2">
    <citation type="journal article" date="2005" name="Nature">
        <title>The map-based sequence of the rice genome.</title>
        <authorList>
            <consortium name="International rice genome sequencing project (IRGSP)"/>
        </authorList>
    </citation>
    <scope>NUCLEOTIDE SEQUENCE [LARGE SCALE GENOMIC DNA]</scope>
    <source>
        <strain>cv. Nipponbare</strain>
    </source>
</reference>
<reference key="3">
    <citation type="journal article" date="2008" name="Nucleic Acids Res.">
        <title>The rice annotation project database (RAP-DB): 2008 update.</title>
        <authorList>
            <consortium name="The rice annotation project (RAP)"/>
        </authorList>
    </citation>
    <scope>GENOME REANNOTATION</scope>
    <source>
        <strain>cv. Nipponbare</strain>
    </source>
</reference>
<reference key="4">
    <citation type="journal article" date="2013" name="Rice">
        <title>Improvement of the Oryza sativa Nipponbare reference genome using next generation sequence and optical map data.</title>
        <authorList>
            <person name="Kawahara Y."/>
            <person name="de la Bastide M."/>
            <person name="Hamilton J.P."/>
            <person name="Kanamori H."/>
            <person name="McCombie W.R."/>
            <person name="Ouyang S."/>
            <person name="Schwartz D.C."/>
            <person name="Tanaka T."/>
            <person name="Wu J."/>
            <person name="Zhou S."/>
            <person name="Childs K.L."/>
            <person name="Davidson R.M."/>
            <person name="Lin H."/>
            <person name="Quesada-Ocampo L."/>
            <person name="Vaillancourt B."/>
            <person name="Sakai H."/>
            <person name="Lee S.S."/>
            <person name="Kim J."/>
            <person name="Numa H."/>
            <person name="Itoh T."/>
            <person name="Buell C.R."/>
            <person name="Matsumoto T."/>
        </authorList>
    </citation>
    <scope>GENOME REANNOTATION</scope>
    <source>
        <strain>cv. Nipponbare</strain>
    </source>
</reference>
<reference key="5">
    <citation type="journal article" date="2005" name="PLoS Biol.">
        <title>The genomes of Oryza sativa: a history of duplications.</title>
        <authorList>
            <person name="Yu J."/>
            <person name="Wang J."/>
            <person name="Lin W."/>
            <person name="Li S."/>
            <person name="Li H."/>
            <person name="Zhou J."/>
            <person name="Ni P."/>
            <person name="Dong W."/>
            <person name="Hu S."/>
            <person name="Zeng C."/>
            <person name="Zhang J."/>
            <person name="Zhang Y."/>
            <person name="Li R."/>
            <person name="Xu Z."/>
            <person name="Li S."/>
            <person name="Li X."/>
            <person name="Zheng H."/>
            <person name="Cong L."/>
            <person name="Lin L."/>
            <person name="Yin J."/>
            <person name="Geng J."/>
            <person name="Li G."/>
            <person name="Shi J."/>
            <person name="Liu J."/>
            <person name="Lv H."/>
            <person name="Li J."/>
            <person name="Wang J."/>
            <person name="Deng Y."/>
            <person name="Ran L."/>
            <person name="Shi X."/>
            <person name="Wang X."/>
            <person name="Wu Q."/>
            <person name="Li C."/>
            <person name="Ren X."/>
            <person name="Wang J."/>
            <person name="Wang X."/>
            <person name="Li D."/>
            <person name="Liu D."/>
            <person name="Zhang X."/>
            <person name="Ji Z."/>
            <person name="Zhao W."/>
            <person name="Sun Y."/>
            <person name="Zhang Z."/>
            <person name="Bao J."/>
            <person name="Han Y."/>
            <person name="Dong L."/>
            <person name="Ji J."/>
            <person name="Chen P."/>
            <person name="Wu S."/>
            <person name="Liu J."/>
            <person name="Xiao Y."/>
            <person name="Bu D."/>
            <person name="Tan J."/>
            <person name="Yang L."/>
            <person name="Ye C."/>
            <person name="Zhang J."/>
            <person name="Xu J."/>
            <person name="Zhou Y."/>
            <person name="Yu Y."/>
            <person name="Zhang B."/>
            <person name="Zhuang S."/>
            <person name="Wei H."/>
            <person name="Liu B."/>
            <person name="Lei M."/>
            <person name="Yu H."/>
            <person name="Li Y."/>
            <person name="Xu H."/>
            <person name="Wei S."/>
            <person name="He X."/>
            <person name="Fang L."/>
            <person name="Zhang Z."/>
            <person name="Zhang Y."/>
            <person name="Huang X."/>
            <person name="Su Z."/>
            <person name="Tong W."/>
            <person name="Li J."/>
            <person name="Tong Z."/>
            <person name="Li S."/>
            <person name="Ye J."/>
            <person name="Wang L."/>
            <person name="Fang L."/>
            <person name="Lei T."/>
            <person name="Chen C.-S."/>
            <person name="Chen H.-C."/>
            <person name="Xu Z."/>
            <person name="Li H."/>
            <person name="Huang H."/>
            <person name="Zhang F."/>
            <person name="Xu H."/>
            <person name="Li N."/>
            <person name="Zhao C."/>
            <person name="Li S."/>
            <person name="Dong L."/>
            <person name="Huang Y."/>
            <person name="Li L."/>
            <person name="Xi Y."/>
            <person name="Qi Q."/>
            <person name="Li W."/>
            <person name="Zhang B."/>
            <person name="Hu W."/>
            <person name="Zhang Y."/>
            <person name="Tian X."/>
            <person name="Jiao Y."/>
            <person name="Liang X."/>
            <person name="Jin J."/>
            <person name="Gao L."/>
            <person name="Zheng W."/>
            <person name="Hao B."/>
            <person name="Liu S.-M."/>
            <person name="Wang W."/>
            <person name="Yuan L."/>
            <person name="Cao M."/>
            <person name="McDermott J."/>
            <person name="Samudrala R."/>
            <person name="Wang J."/>
            <person name="Wong G.K.-S."/>
            <person name="Yang H."/>
        </authorList>
    </citation>
    <scope>NUCLEOTIDE SEQUENCE [LARGE SCALE GENOMIC DNA]</scope>
    <source>
        <strain>cv. Nipponbare</strain>
    </source>
</reference>
<reference key="6">
    <citation type="journal article" date="2003" name="Science">
        <title>Collection, mapping, and annotation of over 28,000 cDNA clones from japonica rice.</title>
        <authorList>
            <consortium name="The rice full-length cDNA consortium"/>
        </authorList>
    </citation>
    <scope>NUCLEOTIDE SEQUENCE [LARGE SCALE MRNA]</scope>
    <source>
        <strain>cv. Nipponbare</strain>
    </source>
</reference>
<name>XDH_ORYSJ</name>
<comment type="function">
    <text evidence="2">Key enzyme involved in purine catabolism. Catalyzes the oxidation of hypoxanthine to xanthine and the oxidation of xanthine to urate.</text>
</comment>
<comment type="catalytic activity">
    <reaction evidence="2">
        <text>xanthine + NAD(+) + H2O = urate + NADH + H(+)</text>
        <dbReference type="Rhea" id="RHEA:16669"/>
        <dbReference type="ChEBI" id="CHEBI:15377"/>
        <dbReference type="ChEBI" id="CHEBI:15378"/>
        <dbReference type="ChEBI" id="CHEBI:17712"/>
        <dbReference type="ChEBI" id="CHEBI:17775"/>
        <dbReference type="ChEBI" id="CHEBI:57540"/>
        <dbReference type="ChEBI" id="CHEBI:57945"/>
        <dbReference type="EC" id="1.17.1.4"/>
    </reaction>
</comment>
<comment type="catalytic activity">
    <reaction evidence="2">
        <text>hypoxanthine + NAD(+) + H2O = xanthine + NADH + H(+)</text>
        <dbReference type="Rhea" id="RHEA:24670"/>
        <dbReference type="ChEBI" id="CHEBI:15377"/>
        <dbReference type="ChEBI" id="CHEBI:15378"/>
        <dbReference type="ChEBI" id="CHEBI:17368"/>
        <dbReference type="ChEBI" id="CHEBI:17712"/>
        <dbReference type="ChEBI" id="CHEBI:57540"/>
        <dbReference type="ChEBI" id="CHEBI:57945"/>
        <dbReference type="EC" id="1.17.1.4"/>
    </reaction>
</comment>
<comment type="cofactor">
    <cofactor evidence="1">
        <name>[2Fe-2S] cluster</name>
        <dbReference type="ChEBI" id="CHEBI:190135"/>
    </cofactor>
    <text evidence="1">Binds 2 [2Fe-2S] clusters.</text>
</comment>
<comment type="cofactor">
    <cofactor evidence="1">
        <name>FAD</name>
        <dbReference type="ChEBI" id="CHEBI:57692"/>
    </cofactor>
</comment>
<comment type="cofactor">
    <cofactor evidence="1">
        <name>Mo-molybdopterin</name>
        <dbReference type="ChEBI" id="CHEBI:71302"/>
    </cofactor>
    <text evidence="1">Binds 1 Mo-molybdopterin (Mo-MPT) cofactor per subunit.</text>
</comment>
<comment type="subunit">
    <text evidence="1">Homodimer.</text>
</comment>
<comment type="similarity">
    <text evidence="5">Belongs to the xanthine dehydrogenase family.</text>
</comment>
<comment type="sequence caution" evidence="5">
    <conflict type="erroneous gene model prediction">
        <sequence resource="EMBL-CDS" id="ABF96752"/>
    </conflict>
</comment>
<sequence length="1369" mass="150227">MGSLTRAEEEETAAAEEWSGEAVVYVNGVRRVLPDGLAHLTLLQYLRDIGLPGTKLGCGEGGCGACTVMVSCYDQTTKKTQHFAINACLAPLYSVEGMHIITVEGIGNRQRGLHPIQERLAMAHGSQCGFCTPGFVMSMYALLRSSEQPPTEEQIEDSLAGNLCRCTGYRPIIDAFRVFSKRDDLLYNNSSLKNADGRPICPSTGKPCSCGDQKDINGSESSLLTPTKSYSPCSYNEIDGNAYSEKELIFPPELQLRKVTSLKLNGFNGIRWYRPLKLKQVLHLKACYPNAKLIIGNSEVGVETKFKNAQYKVLISVTHVPELHTLKVKEDGIHIGSSVRLAQLQNFLRKVILERDSHEISSCEAILRQLKWFAGTQIRNVASVGGNICTASPISDLNPLWMATGATFEIIDVNNNIRTIPAKDFFLGYRKVDLKPDEILLSVILPWTRPFEFVKEFKQAHRREDDIALVNAGMRVYIRKVEGDWIISDVSIIYGGVAAVSHRASKTETFLTGKKWDYGLLDKTFDLLKEDVVLAENAPGGMVEFRSSLTLSFFFKFFLHVTHEMNIKGFWKDGLHATNLSAIQSFTRPVGVGTQCYELVRQGTAVGQPVVHTSAMLQVTGEAEYTDDTPTPPNTLHAALVLSTKAHARILSIDASLAKSSPGFAGLFLSKDVPGANHTGPVIHDEEVFASDVVTCVGQIVGLVVADTRDNAKAAANKVNIEYSELPAILSIEEAVKAGSFHPNSKRCLVKGNVEQCFLSGACDRIIEGKVQVGGQEHFYMEPQSTLVWPVDSGNEIHMISSTQAPQKHQKYVANVLGLPQSRVVCKTKRIGGGFGGKETRSAIFAAAASVAAYCLRQPVKLVLDRDIDMMTTGQRHSFLGKYKVGFTDDGKILALDLDVYNNGGHSHDLSLPVLERAMFHSDNVYDIPNVRVNGQVCFTNFPSNTAFRGFGGPQAMLIAENWIQHMATELKRSPEEIKELNFQSEGSVLHYGQLLQNCTIHSVWDELKVSCNFMEARKAVIDFNNNNRWRKRGIAMVPTKFGISFTTKFMNQAGALVQVYTDGTVLVTHGGVEMGQGLHTKVAQVAASSFNIPLSSIFISETSTDKVPNATPTAASASSDLYGAAVLDACQQIMARMEPVASRGNHKSFAELVLACYLERIDLSAHGFYITPDVGFDWVSGKGTPFYYFTYGAAFAEVEIDTLTGDFHTRTVDIVMDLGCSINPAIDIGQIEGGFIQGLGWAALEELKWGDDNHKWIRPGHLFTCGPGSYKIPSVNDIPLNFKVSLLKGVLNPKVIHSSKAVGEPPFFLGSAVLFAIKDAISAARAEEGHFDWFPLDSPATPERIRMACVDSITKKFASVYYRPKLSV</sequence>
<gene>
    <name type="primary">XDH</name>
    <name type="ordered locus">Os03g0429800</name>
    <name type="ordered locus">LOC_Os03g31550</name>
    <name type="ORF">OsJ_11360</name>
    <name type="ORF">OSJNBa0091B22.11</name>
</gene>
<evidence type="ECO:0000250" key="1"/>
<evidence type="ECO:0000250" key="2">
    <source>
        <dbReference type="UniProtKB" id="Q8GUQ8"/>
    </source>
</evidence>
<evidence type="ECO:0000255" key="3">
    <source>
        <dbReference type="PROSITE-ProRule" id="PRU00465"/>
    </source>
</evidence>
<evidence type="ECO:0000255" key="4">
    <source>
        <dbReference type="PROSITE-ProRule" id="PRU00718"/>
    </source>
</evidence>
<evidence type="ECO:0000305" key="5"/>
<feature type="chain" id="PRO_0000417459" description="Xanthine dehydrogenase">
    <location>
        <begin position="1"/>
        <end position="1369"/>
    </location>
</feature>
<feature type="domain" description="2Fe-2S ferredoxin-type" evidence="3">
    <location>
        <begin position="20"/>
        <end position="106"/>
    </location>
</feature>
<feature type="domain" description="FAD-binding PCMH-type" evidence="4">
    <location>
        <begin position="265"/>
        <end position="450"/>
    </location>
</feature>
<feature type="active site" description="Proton acceptor" evidence="1">
    <location>
        <position position="1305"/>
    </location>
</feature>
<feature type="binding site" evidence="3">
    <location>
        <position position="58"/>
    </location>
    <ligand>
        <name>[2Fe-2S] cluster</name>
        <dbReference type="ChEBI" id="CHEBI:190135"/>
        <label>1</label>
    </ligand>
</feature>
<feature type="binding site" evidence="3">
    <location>
        <position position="63"/>
    </location>
    <ligand>
        <name>[2Fe-2S] cluster</name>
        <dbReference type="ChEBI" id="CHEBI:190135"/>
        <label>1</label>
    </ligand>
</feature>
<feature type="binding site" evidence="3">
    <location>
        <position position="66"/>
    </location>
    <ligand>
        <name>[2Fe-2S] cluster</name>
        <dbReference type="ChEBI" id="CHEBI:190135"/>
        <label>1</label>
    </ligand>
</feature>
<feature type="binding site" evidence="3">
    <location>
        <position position="88"/>
    </location>
    <ligand>
        <name>[2Fe-2S] cluster</name>
        <dbReference type="ChEBI" id="CHEBI:190135"/>
        <label>1</label>
    </ligand>
</feature>
<feature type="binding site" evidence="3">
    <location>
        <position position="128"/>
    </location>
    <ligand>
        <name>[2Fe-2S] cluster</name>
        <dbReference type="ChEBI" id="CHEBI:190135"/>
        <label>2</label>
    </ligand>
</feature>
<feature type="binding site" evidence="3">
    <location>
        <position position="131"/>
    </location>
    <ligand>
        <name>[2Fe-2S] cluster</name>
        <dbReference type="ChEBI" id="CHEBI:190135"/>
        <label>2</label>
    </ligand>
</feature>
<feature type="binding site" evidence="3">
    <location>
        <position position="164"/>
    </location>
    <ligand>
        <name>[2Fe-2S] cluster</name>
        <dbReference type="ChEBI" id="CHEBI:190135"/>
        <label>2</label>
    </ligand>
</feature>
<feature type="binding site" evidence="3">
    <location>
        <position position="166"/>
    </location>
    <ligand>
        <name>[2Fe-2S] cluster</name>
        <dbReference type="ChEBI" id="CHEBI:190135"/>
        <label>2</label>
    </ligand>
</feature>
<feature type="binding site" evidence="1">
    <location>
        <begin position="293"/>
        <end position="300"/>
    </location>
    <ligand>
        <name>FAD</name>
        <dbReference type="ChEBI" id="CHEBI:57692"/>
    </ligand>
</feature>
<feature type="binding site" evidence="1">
    <location>
        <position position="373"/>
    </location>
    <ligand>
        <name>FAD</name>
        <dbReference type="ChEBI" id="CHEBI:57692"/>
    </ligand>
</feature>
<feature type="binding site" evidence="1">
    <location>
        <begin position="383"/>
        <end position="387"/>
    </location>
    <ligand>
        <name>FAD</name>
        <dbReference type="ChEBI" id="CHEBI:57692"/>
    </ligand>
</feature>
<feature type="binding site" evidence="1">
    <location>
        <position position="396"/>
    </location>
    <ligand>
        <name>FAD</name>
        <dbReference type="ChEBI" id="CHEBI:57692"/>
    </ligand>
</feature>
<feature type="binding site" evidence="1">
    <location>
        <position position="440"/>
    </location>
    <ligand>
        <name>FAD</name>
        <dbReference type="ChEBI" id="CHEBI:57692"/>
    </ligand>
</feature>
<feature type="binding site" evidence="1">
    <location>
        <position position="458"/>
    </location>
    <ligand>
        <name>FAD</name>
        <dbReference type="ChEBI" id="CHEBI:57692"/>
    </ligand>
</feature>
<feature type="binding site" evidence="1">
    <location>
        <position position="804"/>
    </location>
    <ligand>
        <name>Mo-molybdopterin</name>
        <dbReference type="ChEBI" id="CHEBI:71302"/>
    </ligand>
    <ligandPart>
        <name>Mo</name>
        <dbReference type="ChEBI" id="CHEBI:28685"/>
    </ligandPart>
</feature>
<feature type="binding site" evidence="1">
    <location>
        <position position="835"/>
    </location>
    <ligand>
        <name>Mo-molybdopterin</name>
        <dbReference type="ChEBI" id="CHEBI:71302"/>
    </ligand>
    <ligandPart>
        <name>Mo</name>
        <dbReference type="ChEBI" id="CHEBI:28685"/>
    </ligandPart>
</feature>
<feature type="binding site" evidence="1">
    <location>
        <position position="839"/>
    </location>
    <ligand>
        <name>substrate</name>
    </ligand>
</feature>
<feature type="binding site" evidence="1">
    <location>
        <position position="917"/>
    </location>
    <ligand>
        <name>substrate</name>
    </ligand>
</feature>
<feature type="binding site" evidence="1">
    <location>
        <position position="949"/>
    </location>
    <ligand>
        <name>Mo-molybdopterin</name>
        <dbReference type="ChEBI" id="CHEBI:71302"/>
    </ligand>
    <ligandPart>
        <name>Mo</name>
        <dbReference type="ChEBI" id="CHEBI:28685"/>
    </ligandPart>
</feature>
<feature type="binding site" evidence="1">
    <location>
        <position position="951"/>
    </location>
    <ligand>
        <name>substrate</name>
    </ligand>
</feature>
<feature type="binding site" evidence="1">
    <location>
        <position position="1047"/>
    </location>
    <ligand>
        <name>substrate</name>
    </ligand>
</feature>
<feature type="binding site" evidence="1">
    <location>
        <position position="1116"/>
    </location>
    <ligand>
        <name>Mo-molybdopterin</name>
        <dbReference type="ChEBI" id="CHEBI:71302"/>
    </ligand>
    <ligandPart>
        <name>Mo</name>
        <dbReference type="ChEBI" id="CHEBI:28685"/>
    </ligandPart>
</feature>
<feature type="sequence conflict" description="In Ref. 6; AK067814." evidence="5" ref="6">
    <original>G</original>
    <variation>D</variation>
    <location>
        <position position="1290"/>
    </location>
</feature>
<dbReference type="EC" id="1.17.1.4" evidence="2"/>
<dbReference type="EMBL" id="AC114896">
    <property type="protein sequence ID" value="AAT81740.1"/>
    <property type="molecule type" value="Genomic_DNA"/>
</dbReference>
<dbReference type="EMBL" id="DP000009">
    <property type="protein sequence ID" value="ABF96751.1"/>
    <property type="molecule type" value="Genomic_DNA"/>
</dbReference>
<dbReference type="EMBL" id="DP000009">
    <property type="protein sequence ID" value="ABF96752.1"/>
    <property type="status" value="ALT_SEQ"/>
    <property type="molecule type" value="Genomic_DNA"/>
</dbReference>
<dbReference type="EMBL" id="AP008209">
    <property type="protein sequence ID" value="BAF12334.1"/>
    <property type="molecule type" value="Genomic_DNA"/>
</dbReference>
<dbReference type="EMBL" id="AP014959">
    <property type="protein sequence ID" value="BAS84804.1"/>
    <property type="molecule type" value="Genomic_DNA"/>
</dbReference>
<dbReference type="EMBL" id="CM000140">
    <property type="protein sequence ID" value="EEE59305.1"/>
    <property type="molecule type" value="Genomic_DNA"/>
</dbReference>
<dbReference type="EMBL" id="AK067814">
    <property type="status" value="NOT_ANNOTATED_CDS"/>
    <property type="molecule type" value="mRNA"/>
</dbReference>
<dbReference type="RefSeq" id="XP_015630851.1">
    <property type="nucleotide sequence ID" value="XM_015775365.1"/>
</dbReference>
<dbReference type="RefSeq" id="XP_015630852.1">
    <property type="nucleotide sequence ID" value="XM_015775366.1"/>
</dbReference>
<dbReference type="SMR" id="Q6AUV1"/>
<dbReference type="FunCoup" id="Q6AUV1">
    <property type="interactions" value="1127"/>
</dbReference>
<dbReference type="STRING" id="39947.Q6AUV1"/>
<dbReference type="PaxDb" id="39947-Q6AUV1"/>
<dbReference type="EnsemblPlants" id="Os03t0429800-01">
    <property type="protein sequence ID" value="Os03t0429800-01"/>
    <property type="gene ID" value="Os03g0429800"/>
</dbReference>
<dbReference type="EnsemblPlants" id="Os03t0429800-02">
    <property type="protein sequence ID" value="Os03t0429800-02"/>
    <property type="gene ID" value="Os03g0429800"/>
</dbReference>
<dbReference type="Gramene" id="Os03t0429800-01">
    <property type="protein sequence ID" value="Os03t0429800-01"/>
    <property type="gene ID" value="Os03g0429800"/>
</dbReference>
<dbReference type="Gramene" id="Os03t0429800-02">
    <property type="protein sequence ID" value="Os03t0429800-02"/>
    <property type="gene ID" value="Os03g0429800"/>
</dbReference>
<dbReference type="KEGG" id="dosa:Os03g0429800"/>
<dbReference type="eggNOG" id="KOG0430">
    <property type="taxonomic scope" value="Eukaryota"/>
</dbReference>
<dbReference type="HOGENOM" id="CLU_001681_1_2_1"/>
<dbReference type="InParanoid" id="Q6AUV1"/>
<dbReference type="OMA" id="PHPTQER"/>
<dbReference type="OrthoDB" id="8300278at2759"/>
<dbReference type="PlantReactome" id="R-OSA-1119407">
    <property type="pathway name" value="Ureide biosynthesis"/>
</dbReference>
<dbReference type="Proteomes" id="UP000000763">
    <property type="component" value="Chromosome 3"/>
</dbReference>
<dbReference type="Proteomes" id="UP000007752">
    <property type="component" value="Chromosome 3"/>
</dbReference>
<dbReference type="Proteomes" id="UP000059680">
    <property type="component" value="Chromosome 3"/>
</dbReference>
<dbReference type="ExpressionAtlas" id="Q6AUV1">
    <property type="expression patterns" value="baseline and differential"/>
</dbReference>
<dbReference type="GO" id="GO:0051537">
    <property type="term" value="F:2 iron, 2 sulfur cluster binding"/>
    <property type="evidence" value="ECO:0007669"/>
    <property type="project" value="UniProtKB-KW"/>
</dbReference>
<dbReference type="GO" id="GO:0071949">
    <property type="term" value="F:FAD binding"/>
    <property type="evidence" value="ECO:0007669"/>
    <property type="project" value="InterPro"/>
</dbReference>
<dbReference type="GO" id="GO:0005506">
    <property type="term" value="F:iron ion binding"/>
    <property type="evidence" value="ECO:0007669"/>
    <property type="project" value="InterPro"/>
</dbReference>
<dbReference type="GO" id="GO:0016491">
    <property type="term" value="F:oxidoreductase activity"/>
    <property type="evidence" value="ECO:0000318"/>
    <property type="project" value="GO_Central"/>
</dbReference>
<dbReference type="GO" id="GO:0004854">
    <property type="term" value="F:xanthine dehydrogenase activity"/>
    <property type="evidence" value="ECO:0007669"/>
    <property type="project" value="UniProtKB-EC"/>
</dbReference>
<dbReference type="FunFam" id="3.10.20.30:FF:000015">
    <property type="entry name" value="Aldehyde oxidase 1"/>
    <property type="match status" value="1"/>
</dbReference>
<dbReference type="FunFam" id="3.30.365.10:FF:000003">
    <property type="entry name" value="Aldehyde oxidase 1"/>
    <property type="match status" value="1"/>
</dbReference>
<dbReference type="FunFam" id="3.90.1170.50:FF:000001">
    <property type="entry name" value="Aldehyde oxidase 1"/>
    <property type="match status" value="1"/>
</dbReference>
<dbReference type="FunFam" id="3.30.365.10:FF:000004">
    <property type="entry name" value="Xanthine dehydrogenase oxidase"/>
    <property type="match status" value="1"/>
</dbReference>
<dbReference type="FunFam" id="3.30.43.10:FF:000001">
    <property type="entry name" value="Xanthine dehydrogenase/oxidase"/>
    <property type="match status" value="1"/>
</dbReference>
<dbReference type="FunFam" id="3.30.465.10:FF:000004">
    <property type="entry name" value="Xanthine dehydrogenase/oxidase"/>
    <property type="match status" value="1"/>
</dbReference>
<dbReference type="Gene3D" id="3.10.20.30">
    <property type="match status" value="1"/>
</dbReference>
<dbReference type="Gene3D" id="3.30.465.10">
    <property type="match status" value="1"/>
</dbReference>
<dbReference type="Gene3D" id="1.10.150.120">
    <property type="entry name" value="[2Fe-2S]-binding domain"/>
    <property type="match status" value="1"/>
</dbReference>
<dbReference type="Gene3D" id="3.90.1170.50">
    <property type="entry name" value="Aldehyde oxidase/xanthine dehydrogenase, a/b hammerhead"/>
    <property type="match status" value="1"/>
</dbReference>
<dbReference type="Gene3D" id="3.30.365.10">
    <property type="entry name" value="Aldehyde oxidase/xanthine dehydrogenase, molybdopterin binding domain"/>
    <property type="match status" value="4"/>
</dbReference>
<dbReference type="Gene3D" id="3.30.390.50">
    <property type="entry name" value="CO dehydrogenase flavoprotein, C-terminal domain"/>
    <property type="match status" value="1"/>
</dbReference>
<dbReference type="Gene3D" id="3.30.43.10">
    <property type="entry name" value="Uridine Diphospho-n-acetylenolpyruvylglucosamine Reductase, domain 2"/>
    <property type="match status" value="1"/>
</dbReference>
<dbReference type="InterPro" id="IPR002888">
    <property type="entry name" value="2Fe-2S-bd"/>
</dbReference>
<dbReference type="InterPro" id="IPR036884">
    <property type="entry name" value="2Fe-2S-bd_dom_sf"/>
</dbReference>
<dbReference type="InterPro" id="IPR036010">
    <property type="entry name" value="2Fe-2S_ferredoxin-like_sf"/>
</dbReference>
<dbReference type="InterPro" id="IPR001041">
    <property type="entry name" value="2Fe-2S_ferredoxin-type"/>
</dbReference>
<dbReference type="InterPro" id="IPR006058">
    <property type="entry name" value="2Fe2S_fd_BS"/>
</dbReference>
<dbReference type="InterPro" id="IPR000674">
    <property type="entry name" value="Ald_Oxase/Xan_DH_a/b"/>
</dbReference>
<dbReference type="InterPro" id="IPR036856">
    <property type="entry name" value="Ald_Oxase/Xan_DH_a/b_sf"/>
</dbReference>
<dbReference type="InterPro" id="IPR016208">
    <property type="entry name" value="Ald_Oxase/xanthine_DH-like"/>
</dbReference>
<dbReference type="InterPro" id="IPR008274">
    <property type="entry name" value="AldOxase/xan_DH_MoCoBD1"/>
</dbReference>
<dbReference type="InterPro" id="IPR046867">
    <property type="entry name" value="AldOxase/xan_DH_MoCoBD2"/>
</dbReference>
<dbReference type="InterPro" id="IPR037165">
    <property type="entry name" value="AldOxase/xan_DH_Mopterin-bd_sf"/>
</dbReference>
<dbReference type="InterPro" id="IPR012675">
    <property type="entry name" value="Beta-grasp_dom_sf"/>
</dbReference>
<dbReference type="InterPro" id="IPR005107">
    <property type="entry name" value="CO_DH_flav_C"/>
</dbReference>
<dbReference type="InterPro" id="IPR036683">
    <property type="entry name" value="CO_DH_flav_C_dom_sf"/>
</dbReference>
<dbReference type="InterPro" id="IPR016166">
    <property type="entry name" value="FAD-bd_PCMH"/>
</dbReference>
<dbReference type="InterPro" id="IPR036318">
    <property type="entry name" value="FAD-bd_PCMH-like_sf"/>
</dbReference>
<dbReference type="InterPro" id="IPR016167">
    <property type="entry name" value="FAD-bd_PCMH_sub1"/>
</dbReference>
<dbReference type="InterPro" id="IPR016169">
    <property type="entry name" value="FAD-bd_PCMH_sub2"/>
</dbReference>
<dbReference type="InterPro" id="IPR002346">
    <property type="entry name" value="Mopterin_DH_FAD-bd"/>
</dbReference>
<dbReference type="PANTHER" id="PTHR45444">
    <property type="entry name" value="XANTHINE DEHYDROGENASE"/>
    <property type="match status" value="1"/>
</dbReference>
<dbReference type="PANTHER" id="PTHR45444:SF3">
    <property type="entry name" value="XANTHINE DEHYDROGENASE"/>
    <property type="match status" value="1"/>
</dbReference>
<dbReference type="Pfam" id="PF01315">
    <property type="entry name" value="Ald_Xan_dh_C"/>
    <property type="match status" value="1"/>
</dbReference>
<dbReference type="Pfam" id="PF03450">
    <property type="entry name" value="CO_deh_flav_C"/>
    <property type="match status" value="1"/>
</dbReference>
<dbReference type="Pfam" id="PF00941">
    <property type="entry name" value="FAD_binding_5"/>
    <property type="match status" value="1"/>
</dbReference>
<dbReference type="Pfam" id="PF00111">
    <property type="entry name" value="Fer2"/>
    <property type="match status" value="1"/>
</dbReference>
<dbReference type="Pfam" id="PF01799">
    <property type="entry name" value="Fer2_2"/>
    <property type="match status" value="1"/>
</dbReference>
<dbReference type="Pfam" id="PF02738">
    <property type="entry name" value="MoCoBD_1"/>
    <property type="match status" value="1"/>
</dbReference>
<dbReference type="Pfam" id="PF20256">
    <property type="entry name" value="MoCoBD_2"/>
    <property type="match status" value="1"/>
</dbReference>
<dbReference type="PIRSF" id="PIRSF000127">
    <property type="entry name" value="Xanthine_DH"/>
    <property type="match status" value="1"/>
</dbReference>
<dbReference type="SMART" id="SM01008">
    <property type="entry name" value="Ald_Xan_dh_C"/>
    <property type="match status" value="1"/>
</dbReference>
<dbReference type="SMART" id="SM01092">
    <property type="entry name" value="CO_deh_flav_C"/>
    <property type="match status" value="1"/>
</dbReference>
<dbReference type="SUPFAM" id="SSF54292">
    <property type="entry name" value="2Fe-2S ferredoxin-like"/>
    <property type="match status" value="1"/>
</dbReference>
<dbReference type="SUPFAM" id="SSF55447">
    <property type="entry name" value="CO dehydrogenase flavoprotein C-terminal domain-like"/>
    <property type="match status" value="1"/>
</dbReference>
<dbReference type="SUPFAM" id="SSF47741">
    <property type="entry name" value="CO dehydrogenase ISP C-domain like"/>
    <property type="match status" value="1"/>
</dbReference>
<dbReference type="SUPFAM" id="SSF54665">
    <property type="entry name" value="CO dehydrogenase molybdoprotein N-domain-like"/>
    <property type="match status" value="1"/>
</dbReference>
<dbReference type="SUPFAM" id="SSF56176">
    <property type="entry name" value="FAD-binding/transporter-associated domain-like"/>
    <property type="match status" value="1"/>
</dbReference>
<dbReference type="SUPFAM" id="SSF56003">
    <property type="entry name" value="Molybdenum cofactor-binding domain"/>
    <property type="match status" value="1"/>
</dbReference>
<dbReference type="PROSITE" id="PS00197">
    <property type="entry name" value="2FE2S_FER_1"/>
    <property type="match status" value="1"/>
</dbReference>
<dbReference type="PROSITE" id="PS51085">
    <property type="entry name" value="2FE2S_FER_2"/>
    <property type="match status" value="1"/>
</dbReference>
<dbReference type="PROSITE" id="PS51387">
    <property type="entry name" value="FAD_PCMH"/>
    <property type="match status" value="1"/>
</dbReference>
<accession>Q6AUV1</accession>
<accession>A0A0P0VZ09</accession>
<accession>Q10J86</accession>
<protein>
    <recommendedName>
        <fullName>Xanthine dehydrogenase</fullName>
        <ecNumber evidence="2">1.17.1.4</ecNumber>
    </recommendedName>
</protein>
<keyword id="KW-0001">2Fe-2S</keyword>
<keyword id="KW-0274">FAD</keyword>
<keyword id="KW-0285">Flavoprotein</keyword>
<keyword id="KW-0408">Iron</keyword>
<keyword id="KW-0411">Iron-sulfur</keyword>
<keyword id="KW-0479">Metal-binding</keyword>
<keyword id="KW-0500">Molybdenum</keyword>
<keyword id="KW-0520">NAD</keyword>
<keyword id="KW-0560">Oxidoreductase</keyword>
<keyword id="KW-1185">Reference proteome</keyword>
<organism>
    <name type="scientific">Oryza sativa subsp. japonica</name>
    <name type="common">Rice</name>
    <dbReference type="NCBI Taxonomy" id="39947"/>
    <lineage>
        <taxon>Eukaryota</taxon>
        <taxon>Viridiplantae</taxon>
        <taxon>Streptophyta</taxon>
        <taxon>Embryophyta</taxon>
        <taxon>Tracheophyta</taxon>
        <taxon>Spermatophyta</taxon>
        <taxon>Magnoliopsida</taxon>
        <taxon>Liliopsida</taxon>
        <taxon>Poales</taxon>
        <taxon>Poaceae</taxon>
        <taxon>BOP clade</taxon>
        <taxon>Oryzoideae</taxon>
        <taxon>Oryzeae</taxon>
        <taxon>Oryzinae</taxon>
        <taxon>Oryza</taxon>
        <taxon>Oryza sativa</taxon>
    </lineage>
</organism>
<proteinExistence type="evidence at transcript level"/>